<proteinExistence type="inferred from homology"/>
<gene>
    <name evidence="1" type="primary">rpsG</name>
    <name type="ordered locus">HSM_1808</name>
</gene>
<feature type="chain" id="PRO_1000081285" description="Small ribosomal subunit protein uS7">
    <location>
        <begin position="1"/>
        <end position="156"/>
    </location>
</feature>
<keyword id="KW-0687">Ribonucleoprotein</keyword>
<keyword id="KW-0689">Ribosomal protein</keyword>
<keyword id="KW-0694">RNA-binding</keyword>
<keyword id="KW-0699">rRNA-binding</keyword>
<keyword id="KW-0820">tRNA-binding</keyword>
<protein>
    <recommendedName>
        <fullName evidence="1">Small ribosomal subunit protein uS7</fullName>
    </recommendedName>
    <alternativeName>
        <fullName evidence="2">30S ribosomal protein S7</fullName>
    </alternativeName>
</protein>
<evidence type="ECO:0000255" key="1">
    <source>
        <dbReference type="HAMAP-Rule" id="MF_00480"/>
    </source>
</evidence>
<evidence type="ECO:0000305" key="2"/>
<reference key="1">
    <citation type="submission" date="2008-02" db="EMBL/GenBank/DDBJ databases">
        <title>Complete sequence of Haemophilus somnus 2336.</title>
        <authorList>
            <consortium name="US DOE Joint Genome Institute"/>
            <person name="Siddaramappa S."/>
            <person name="Duncan A.J."/>
            <person name="Challacombe J.F."/>
            <person name="Rainey D."/>
            <person name="Gillaspy A.F."/>
            <person name="Carson M."/>
            <person name="Gipson J."/>
            <person name="Gipson M."/>
            <person name="Bruce D."/>
            <person name="Detter J.C."/>
            <person name="Han C.S."/>
            <person name="Land M."/>
            <person name="Tapia R."/>
            <person name="Thompson L.S."/>
            <person name="Orvis J."/>
            <person name="Zaitshik J."/>
            <person name="Barnes G."/>
            <person name="Brettin T.S."/>
            <person name="Dyer D.W."/>
            <person name="Inzana T.J."/>
        </authorList>
    </citation>
    <scope>NUCLEOTIDE SEQUENCE [LARGE SCALE GENOMIC DNA]</scope>
    <source>
        <strain>2336</strain>
    </source>
</reference>
<organism>
    <name type="scientific">Histophilus somni (strain 2336)</name>
    <name type="common">Haemophilus somnus</name>
    <dbReference type="NCBI Taxonomy" id="228400"/>
    <lineage>
        <taxon>Bacteria</taxon>
        <taxon>Pseudomonadati</taxon>
        <taxon>Pseudomonadota</taxon>
        <taxon>Gammaproteobacteria</taxon>
        <taxon>Pasteurellales</taxon>
        <taxon>Pasteurellaceae</taxon>
        <taxon>Histophilus</taxon>
    </lineage>
</organism>
<accession>B0UWC5</accession>
<name>RS7_HISS2</name>
<dbReference type="EMBL" id="CP000947">
    <property type="protein sequence ID" value="ACA31594.1"/>
    <property type="molecule type" value="Genomic_DNA"/>
</dbReference>
<dbReference type="RefSeq" id="WP_011609791.1">
    <property type="nucleotide sequence ID" value="NC_010519.1"/>
</dbReference>
<dbReference type="SMR" id="B0UWC5"/>
<dbReference type="STRING" id="228400.HSM_1808"/>
<dbReference type="GeneID" id="66256923"/>
<dbReference type="KEGG" id="hsm:HSM_1808"/>
<dbReference type="HOGENOM" id="CLU_072226_1_1_6"/>
<dbReference type="GO" id="GO:0015935">
    <property type="term" value="C:small ribosomal subunit"/>
    <property type="evidence" value="ECO:0007669"/>
    <property type="project" value="InterPro"/>
</dbReference>
<dbReference type="GO" id="GO:0019843">
    <property type="term" value="F:rRNA binding"/>
    <property type="evidence" value="ECO:0007669"/>
    <property type="project" value="UniProtKB-UniRule"/>
</dbReference>
<dbReference type="GO" id="GO:0003735">
    <property type="term" value="F:structural constituent of ribosome"/>
    <property type="evidence" value="ECO:0007669"/>
    <property type="project" value="InterPro"/>
</dbReference>
<dbReference type="GO" id="GO:0000049">
    <property type="term" value="F:tRNA binding"/>
    <property type="evidence" value="ECO:0007669"/>
    <property type="project" value="UniProtKB-UniRule"/>
</dbReference>
<dbReference type="GO" id="GO:0006412">
    <property type="term" value="P:translation"/>
    <property type="evidence" value="ECO:0007669"/>
    <property type="project" value="UniProtKB-UniRule"/>
</dbReference>
<dbReference type="CDD" id="cd14869">
    <property type="entry name" value="uS7_Bacteria"/>
    <property type="match status" value="1"/>
</dbReference>
<dbReference type="FunFam" id="1.10.455.10:FF:000001">
    <property type="entry name" value="30S ribosomal protein S7"/>
    <property type="match status" value="1"/>
</dbReference>
<dbReference type="Gene3D" id="1.10.455.10">
    <property type="entry name" value="Ribosomal protein S7 domain"/>
    <property type="match status" value="1"/>
</dbReference>
<dbReference type="HAMAP" id="MF_00480_B">
    <property type="entry name" value="Ribosomal_uS7_B"/>
    <property type="match status" value="1"/>
</dbReference>
<dbReference type="InterPro" id="IPR000235">
    <property type="entry name" value="Ribosomal_uS7"/>
</dbReference>
<dbReference type="InterPro" id="IPR005717">
    <property type="entry name" value="Ribosomal_uS7_bac/org-type"/>
</dbReference>
<dbReference type="InterPro" id="IPR020606">
    <property type="entry name" value="Ribosomal_uS7_CS"/>
</dbReference>
<dbReference type="InterPro" id="IPR023798">
    <property type="entry name" value="Ribosomal_uS7_dom"/>
</dbReference>
<dbReference type="InterPro" id="IPR036823">
    <property type="entry name" value="Ribosomal_uS7_dom_sf"/>
</dbReference>
<dbReference type="NCBIfam" id="TIGR01029">
    <property type="entry name" value="rpsG_bact"/>
    <property type="match status" value="1"/>
</dbReference>
<dbReference type="PANTHER" id="PTHR11205">
    <property type="entry name" value="RIBOSOMAL PROTEIN S7"/>
    <property type="match status" value="1"/>
</dbReference>
<dbReference type="Pfam" id="PF00177">
    <property type="entry name" value="Ribosomal_S7"/>
    <property type="match status" value="1"/>
</dbReference>
<dbReference type="PIRSF" id="PIRSF002122">
    <property type="entry name" value="RPS7p_RPS7a_RPS5e_RPS7o"/>
    <property type="match status" value="1"/>
</dbReference>
<dbReference type="SUPFAM" id="SSF47973">
    <property type="entry name" value="Ribosomal protein S7"/>
    <property type="match status" value="1"/>
</dbReference>
<dbReference type="PROSITE" id="PS00052">
    <property type="entry name" value="RIBOSOMAL_S7"/>
    <property type="match status" value="1"/>
</dbReference>
<sequence>MPRRRRIEPRKILPDPKFGSELLAKFINVLMVDGKKSIAESIVYGALETLSQRTGKEALEAFEIALENVRPTVEVKSRRVGGSTYQVPVEVRPTRRNALGMRWIVEAARKRGDKSMALRLANELSDASENKGAAVKKREDVHRMAEANKAFAHYRW</sequence>
<comment type="function">
    <text evidence="1">One of the primary rRNA binding proteins, it binds directly to 16S rRNA where it nucleates assembly of the head domain of the 30S subunit. Is located at the subunit interface close to the decoding center, probably blocks exit of the E-site tRNA.</text>
</comment>
<comment type="subunit">
    <text evidence="1">Part of the 30S ribosomal subunit. Contacts proteins S9 and S11.</text>
</comment>
<comment type="similarity">
    <text evidence="1">Belongs to the universal ribosomal protein uS7 family.</text>
</comment>